<sequence length="452" mass="48987">MAAAVSSVWAKPGAWALEAEEHEAELKQQPSPTNQKSSAEDSSDFPSLAAAATTKTKKKKGQTISLAEFATYGTAKAKPAPQTERLTQAELVALPTGPRERSAEELDRSKLGGGFRSYGGGRYGDESSSSRWGSSRVSEDGERRGGGFNRDREPSRDSGPSRADEDDNWAAAKKPISGNGFERRERGSGGGFFESQSQSKADEVDSWVSTKPSEPRRFVSSNGGGGDRFEKRGSFESLSRNRDSQYGGGGGSESDTWGRRREESGAANGSPPPSGGSRPRLVLQPRTLPVAVVEVVKPESPVLVIVEKPKGANPFGNARPREEVLAEKGQDWKEIDEKLEAEKLKDIAAAMEKPNEKSTGKMGFGLGNGRKDEERIERSWRKSTEHSEEDAQEEEPAVEGAKKEETEDKPAVEEAKKEETEGEQAVEEAKKEETGGEPAVEEAKKEETEDKI</sequence>
<gene>
    <name evidence="6" type="primary">EIF4B3</name>
    <name evidence="8" type="ordered locus">At4g38710</name>
    <name evidence="9" type="ORF">F20M13.270</name>
</gene>
<protein>
    <recommendedName>
        <fullName evidence="6">Eukaryotic translation initiation factor 4B3</fullName>
        <shortName evidence="6">AtTif4B3</shortName>
        <shortName evidence="6">eIF4B3</shortName>
    </recommendedName>
</protein>
<proteinExistence type="evidence at protein level"/>
<keyword id="KW-0007">Acetylation</keyword>
<keyword id="KW-0025">Alternative splicing</keyword>
<keyword id="KW-0396">Initiation factor</keyword>
<keyword id="KW-0539">Nucleus</keyword>
<keyword id="KW-0597">Phosphoprotein</keyword>
<keyword id="KW-0648">Protein biosynthesis</keyword>
<keyword id="KW-1185">Reference proteome</keyword>
<reference key="1">
    <citation type="journal article" date="1999" name="Nature">
        <title>Sequence and analysis of chromosome 4 of the plant Arabidopsis thaliana.</title>
        <authorList>
            <person name="Mayer K.F.X."/>
            <person name="Schueller C."/>
            <person name="Wambutt R."/>
            <person name="Murphy G."/>
            <person name="Volckaert G."/>
            <person name="Pohl T."/>
            <person name="Duesterhoeft A."/>
            <person name="Stiekema W."/>
            <person name="Entian K.-D."/>
            <person name="Terryn N."/>
            <person name="Harris B."/>
            <person name="Ansorge W."/>
            <person name="Brandt P."/>
            <person name="Grivell L.A."/>
            <person name="Rieger M."/>
            <person name="Weichselgartner M."/>
            <person name="de Simone V."/>
            <person name="Obermaier B."/>
            <person name="Mache R."/>
            <person name="Mueller M."/>
            <person name="Kreis M."/>
            <person name="Delseny M."/>
            <person name="Puigdomenech P."/>
            <person name="Watson M."/>
            <person name="Schmidtheini T."/>
            <person name="Reichert B."/>
            <person name="Portetelle D."/>
            <person name="Perez-Alonso M."/>
            <person name="Boutry M."/>
            <person name="Bancroft I."/>
            <person name="Vos P."/>
            <person name="Hoheisel J."/>
            <person name="Zimmermann W."/>
            <person name="Wedler H."/>
            <person name="Ridley P."/>
            <person name="Langham S.-A."/>
            <person name="McCullagh B."/>
            <person name="Bilham L."/>
            <person name="Robben J."/>
            <person name="van der Schueren J."/>
            <person name="Grymonprez B."/>
            <person name="Chuang Y.-J."/>
            <person name="Vandenbussche F."/>
            <person name="Braeken M."/>
            <person name="Weltjens I."/>
            <person name="Voet M."/>
            <person name="Bastiaens I."/>
            <person name="Aert R."/>
            <person name="Defoor E."/>
            <person name="Weitzenegger T."/>
            <person name="Bothe G."/>
            <person name="Ramsperger U."/>
            <person name="Hilbert H."/>
            <person name="Braun M."/>
            <person name="Holzer E."/>
            <person name="Brandt A."/>
            <person name="Peters S."/>
            <person name="van Staveren M."/>
            <person name="Dirkse W."/>
            <person name="Mooijman P."/>
            <person name="Klein Lankhorst R."/>
            <person name="Rose M."/>
            <person name="Hauf J."/>
            <person name="Koetter P."/>
            <person name="Berneiser S."/>
            <person name="Hempel S."/>
            <person name="Feldpausch M."/>
            <person name="Lamberth S."/>
            <person name="Van den Daele H."/>
            <person name="De Keyser A."/>
            <person name="Buysshaert C."/>
            <person name="Gielen J."/>
            <person name="Villarroel R."/>
            <person name="De Clercq R."/>
            <person name="van Montagu M."/>
            <person name="Rogers J."/>
            <person name="Cronin A."/>
            <person name="Quail M.A."/>
            <person name="Bray-Allen S."/>
            <person name="Clark L."/>
            <person name="Doggett J."/>
            <person name="Hall S."/>
            <person name="Kay M."/>
            <person name="Lennard N."/>
            <person name="McLay K."/>
            <person name="Mayes R."/>
            <person name="Pettett A."/>
            <person name="Rajandream M.A."/>
            <person name="Lyne M."/>
            <person name="Benes V."/>
            <person name="Rechmann S."/>
            <person name="Borkova D."/>
            <person name="Bloecker H."/>
            <person name="Scharfe M."/>
            <person name="Grimm M."/>
            <person name="Loehnert T.-H."/>
            <person name="Dose S."/>
            <person name="de Haan M."/>
            <person name="Maarse A.C."/>
            <person name="Schaefer M."/>
            <person name="Mueller-Auer S."/>
            <person name="Gabel C."/>
            <person name="Fuchs M."/>
            <person name="Fartmann B."/>
            <person name="Granderath K."/>
            <person name="Dauner D."/>
            <person name="Herzl A."/>
            <person name="Neumann S."/>
            <person name="Argiriou A."/>
            <person name="Vitale D."/>
            <person name="Liguori R."/>
            <person name="Piravandi E."/>
            <person name="Massenet O."/>
            <person name="Quigley F."/>
            <person name="Clabauld G."/>
            <person name="Muendlein A."/>
            <person name="Felber R."/>
            <person name="Schnabl S."/>
            <person name="Hiller R."/>
            <person name="Schmidt W."/>
            <person name="Lecharny A."/>
            <person name="Aubourg S."/>
            <person name="Chefdor F."/>
            <person name="Cooke R."/>
            <person name="Berger C."/>
            <person name="Monfort A."/>
            <person name="Casacuberta E."/>
            <person name="Gibbons T."/>
            <person name="Weber N."/>
            <person name="Vandenbol M."/>
            <person name="Bargues M."/>
            <person name="Terol J."/>
            <person name="Torres A."/>
            <person name="Perez-Perez A."/>
            <person name="Purnelle B."/>
            <person name="Bent E."/>
            <person name="Johnson S."/>
            <person name="Tacon D."/>
            <person name="Jesse T."/>
            <person name="Heijnen L."/>
            <person name="Schwarz S."/>
            <person name="Scholler P."/>
            <person name="Heber S."/>
            <person name="Francs P."/>
            <person name="Bielke C."/>
            <person name="Frishman D."/>
            <person name="Haase D."/>
            <person name="Lemcke K."/>
            <person name="Mewes H.-W."/>
            <person name="Stocker S."/>
            <person name="Zaccaria P."/>
            <person name="Bevan M."/>
            <person name="Wilson R.K."/>
            <person name="de la Bastide M."/>
            <person name="Habermann K."/>
            <person name="Parnell L."/>
            <person name="Dedhia N."/>
            <person name="Gnoj L."/>
            <person name="Schutz K."/>
            <person name="Huang E."/>
            <person name="Spiegel L."/>
            <person name="Sekhon M."/>
            <person name="Murray J."/>
            <person name="Sheet P."/>
            <person name="Cordes M."/>
            <person name="Abu-Threideh J."/>
            <person name="Stoneking T."/>
            <person name="Kalicki J."/>
            <person name="Graves T."/>
            <person name="Harmon G."/>
            <person name="Edwards J."/>
            <person name="Latreille P."/>
            <person name="Courtney L."/>
            <person name="Cloud J."/>
            <person name="Abbott A."/>
            <person name="Scott K."/>
            <person name="Johnson D."/>
            <person name="Minx P."/>
            <person name="Bentley D."/>
            <person name="Fulton B."/>
            <person name="Miller N."/>
            <person name="Greco T."/>
            <person name="Kemp K."/>
            <person name="Kramer J."/>
            <person name="Fulton L."/>
            <person name="Mardis E."/>
            <person name="Dante M."/>
            <person name="Pepin K."/>
            <person name="Hillier L.W."/>
            <person name="Nelson J."/>
            <person name="Spieth J."/>
            <person name="Ryan E."/>
            <person name="Andrews S."/>
            <person name="Geisel C."/>
            <person name="Layman D."/>
            <person name="Du H."/>
            <person name="Ali J."/>
            <person name="Berghoff A."/>
            <person name="Jones K."/>
            <person name="Drone K."/>
            <person name="Cotton M."/>
            <person name="Joshu C."/>
            <person name="Antonoiu B."/>
            <person name="Zidanic M."/>
            <person name="Strong C."/>
            <person name="Sun H."/>
            <person name="Lamar B."/>
            <person name="Yordan C."/>
            <person name="Ma P."/>
            <person name="Zhong J."/>
            <person name="Preston R."/>
            <person name="Vil D."/>
            <person name="Shekher M."/>
            <person name="Matero A."/>
            <person name="Shah R."/>
            <person name="Swaby I.K."/>
            <person name="O'Shaughnessy A."/>
            <person name="Rodriguez M."/>
            <person name="Hoffman J."/>
            <person name="Till S."/>
            <person name="Granat S."/>
            <person name="Shohdy N."/>
            <person name="Hasegawa A."/>
            <person name="Hameed A."/>
            <person name="Lodhi M."/>
            <person name="Johnson A."/>
            <person name="Chen E."/>
            <person name="Marra M.A."/>
            <person name="Martienssen R."/>
            <person name="McCombie W.R."/>
        </authorList>
    </citation>
    <scope>NUCLEOTIDE SEQUENCE [LARGE SCALE GENOMIC DNA]</scope>
    <source>
        <strain>cv. Columbia</strain>
    </source>
</reference>
<reference key="2">
    <citation type="journal article" date="2017" name="Plant J.">
        <title>Araport11: a complete reannotation of the Arabidopsis thaliana reference genome.</title>
        <authorList>
            <person name="Cheng C.Y."/>
            <person name="Krishnakumar V."/>
            <person name="Chan A.P."/>
            <person name="Thibaud-Nissen F."/>
            <person name="Schobel S."/>
            <person name="Town C.D."/>
        </authorList>
    </citation>
    <scope>GENOME REANNOTATION</scope>
    <source>
        <strain>cv. Columbia</strain>
    </source>
</reference>
<reference key="3">
    <citation type="journal article" date="2003" name="Science">
        <title>Empirical analysis of transcriptional activity in the Arabidopsis genome.</title>
        <authorList>
            <person name="Yamada K."/>
            <person name="Lim J."/>
            <person name="Dale J.M."/>
            <person name="Chen H."/>
            <person name="Shinn P."/>
            <person name="Palm C.J."/>
            <person name="Southwick A.M."/>
            <person name="Wu H.C."/>
            <person name="Kim C.J."/>
            <person name="Nguyen M."/>
            <person name="Pham P.K."/>
            <person name="Cheuk R.F."/>
            <person name="Karlin-Newmann G."/>
            <person name="Liu S.X."/>
            <person name="Lam B."/>
            <person name="Sakano H."/>
            <person name="Wu T."/>
            <person name="Yu G."/>
            <person name="Miranda M."/>
            <person name="Quach H.L."/>
            <person name="Tripp M."/>
            <person name="Chang C.H."/>
            <person name="Lee J.M."/>
            <person name="Toriumi M.J."/>
            <person name="Chan M.M."/>
            <person name="Tang C.C."/>
            <person name="Onodera C.S."/>
            <person name="Deng J.M."/>
            <person name="Akiyama K."/>
            <person name="Ansari Y."/>
            <person name="Arakawa T."/>
            <person name="Banh J."/>
            <person name="Banno F."/>
            <person name="Bowser L."/>
            <person name="Brooks S.Y."/>
            <person name="Carninci P."/>
            <person name="Chao Q."/>
            <person name="Choy N."/>
            <person name="Enju A."/>
            <person name="Goldsmith A.D."/>
            <person name="Gurjal M."/>
            <person name="Hansen N.F."/>
            <person name="Hayashizaki Y."/>
            <person name="Johnson-Hopson C."/>
            <person name="Hsuan V.W."/>
            <person name="Iida K."/>
            <person name="Karnes M."/>
            <person name="Khan S."/>
            <person name="Koesema E."/>
            <person name="Ishida J."/>
            <person name="Jiang P.X."/>
            <person name="Jones T."/>
            <person name="Kawai J."/>
            <person name="Kamiya A."/>
            <person name="Meyers C."/>
            <person name="Nakajima M."/>
            <person name="Narusaka M."/>
            <person name="Seki M."/>
            <person name="Sakurai T."/>
            <person name="Satou M."/>
            <person name="Tamse R."/>
            <person name="Vaysberg M."/>
            <person name="Wallender E.K."/>
            <person name="Wong C."/>
            <person name="Yamamura Y."/>
            <person name="Yuan S."/>
            <person name="Shinozaki K."/>
            <person name="Davis R.W."/>
            <person name="Theologis A."/>
            <person name="Ecker J.R."/>
        </authorList>
    </citation>
    <scope>NUCLEOTIDE SEQUENCE [LARGE SCALE MRNA]</scope>
    <source>
        <strain>cv. Columbia</strain>
    </source>
</reference>
<reference key="4">
    <citation type="journal article" date="1999" name="Biochem. Biophys. Res. Commun.">
        <title>Eukaryotic initiation factor 4B from wheat and Arabidopsis thaliana is a member of a multigene family.</title>
        <authorList>
            <person name="Metz A.M."/>
            <person name="Wong K.C."/>
            <person name="Malmstrom S.A."/>
            <person name="Browning K.S."/>
        </authorList>
    </citation>
    <scope>GENE FAMILY</scope>
    <scope>NOMENCLATURE</scope>
    <source>
        <strain>cv. Chinese Spring</strain>
    </source>
</reference>
<reference key="5">
    <citation type="journal article" date="2009" name="Plant Physiol.">
        <title>Large-scale Arabidopsis phosphoproteome profiling reveals novel chloroplast kinase substrates and phosphorylation networks.</title>
        <authorList>
            <person name="Reiland S."/>
            <person name="Messerli G."/>
            <person name="Baerenfaller K."/>
            <person name="Gerrits B."/>
            <person name="Endler A."/>
            <person name="Grossmann J."/>
            <person name="Gruissem W."/>
            <person name="Baginsky S."/>
        </authorList>
    </citation>
    <scope>PHOSPHORYLATION [LARGE SCALE ANALYSIS] AT SER-234; SER-270 AND SER-300</scope>
    <scope>IDENTIFICATION BY MASS SPECTROMETRY [LARGE SCALE ANALYSIS]</scope>
</reference>
<reference key="6">
    <citation type="journal article" date="2010" name="Mol. Syst. Biol.">
        <title>Targeted interactomics reveals a complex core cell cycle machinery in Arabidopsis thaliana.</title>
        <authorList>
            <person name="Van Leene J."/>
            <person name="Hollunder J."/>
            <person name="Eeckhout D."/>
            <person name="Persiau G."/>
            <person name="Van De Slijke E."/>
            <person name="Stals H."/>
            <person name="Van Isterdael G."/>
            <person name="Verkest A."/>
            <person name="Neirynck S."/>
            <person name="Buffel Y."/>
            <person name="De Bodt S."/>
            <person name="Maere S."/>
            <person name="Laukens K."/>
            <person name="Pharazyn A."/>
            <person name="Ferreira P.C.G."/>
            <person name="Eloy N."/>
            <person name="Renne C."/>
            <person name="Meyer C."/>
            <person name="Faure J.-D."/>
            <person name="Steinbrenner J."/>
            <person name="Beynon J."/>
            <person name="Larkin J.C."/>
            <person name="Van de Peer Y."/>
            <person name="Hilson P."/>
            <person name="Kuiper M."/>
            <person name="De Veylder L."/>
            <person name="Van Onckelen H."/>
            <person name="Inze D."/>
            <person name="Witters E."/>
            <person name="De Jaeger G."/>
        </authorList>
    </citation>
    <scope>INTERACTION WITH MAD2</scope>
</reference>
<reference key="7">
    <citation type="journal article" date="2012" name="Mol. Cell. Proteomics">
        <title>Comparative large-scale characterisation of plant vs. mammal proteins reveals similar and idiosyncratic N-alpha acetylation features.</title>
        <authorList>
            <person name="Bienvenut W.V."/>
            <person name="Sumpton D."/>
            <person name="Martinez A."/>
            <person name="Lilla S."/>
            <person name="Espagne C."/>
            <person name="Meinnel T."/>
            <person name="Giglione C."/>
        </authorList>
    </citation>
    <scope>ACETYLATION [LARGE SCALE ANALYSIS] AT ALA-2</scope>
    <scope>CLEAVAGE OF INITIATOR METHIONINE [LARGE SCALE ANALYSIS]</scope>
    <scope>IDENTIFICATION BY MASS SPECTROMETRY [LARGE SCALE ANALYSIS]</scope>
</reference>
<organism evidence="10">
    <name type="scientific">Arabidopsis thaliana</name>
    <name type="common">Mouse-ear cress</name>
    <dbReference type="NCBI Taxonomy" id="3702"/>
    <lineage>
        <taxon>Eukaryota</taxon>
        <taxon>Viridiplantae</taxon>
        <taxon>Streptophyta</taxon>
        <taxon>Embryophyta</taxon>
        <taxon>Tracheophyta</taxon>
        <taxon>Spermatophyta</taxon>
        <taxon>Magnoliopsida</taxon>
        <taxon>eudicotyledons</taxon>
        <taxon>Gunneridae</taxon>
        <taxon>Pentapetalae</taxon>
        <taxon>rosids</taxon>
        <taxon>malvids</taxon>
        <taxon>Brassicales</taxon>
        <taxon>Brassicaceae</taxon>
        <taxon>Camelineae</taxon>
        <taxon>Arabidopsis</taxon>
    </lineage>
</organism>
<comment type="function">
    <text evidence="1">Promotes the eIF4F and eIF4A RNA-dependent ATP-hydrolysis activity with different efficiency depending on mRNAs, thus providing mRNA discrimination during initiation of translation.</text>
</comment>
<comment type="subunit">
    <text evidence="1 2 5">Homodimer (By similarity). Nonspherical monomer. mRNA-discriminating component of initiation complexes (By similarity). Interacts with MAD2 (PubMed:20706207).</text>
</comment>
<comment type="subcellular location">
    <subcellularLocation>
        <location evidence="3">Nucleus</location>
    </subcellularLocation>
</comment>
<comment type="alternative products">
    <event type="alternative splicing"/>
    <isoform>
        <id>Q9SZP8-1</id>
        <name>1</name>
        <sequence type="displayed"/>
    </isoform>
    <isoform>
        <id>Q9SZP8-2</id>
        <name>2</name>
        <sequence type="described" ref="VSP_057921"/>
    </isoform>
</comment>
<comment type="PTM">
    <text evidence="1">Phosphorylated.</text>
</comment>
<comment type="similarity">
    <text evidence="7">Belongs to the eIF-4 subunit B family.</text>
</comment>
<accession>Q9SZP8</accession>
<accession>F4JUG0</accession>
<dbReference type="EMBL" id="AL035540">
    <property type="protein sequence ID" value="CAB37527.1"/>
    <property type="molecule type" value="Genomic_DNA"/>
</dbReference>
<dbReference type="EMBL" id="AL161593">
    <property type="protein sequence ID" value="CAB80535.1"/>
    <property type="molecule type" value="Genomic_DNA"/>
</dbReference>
<dbReference type="EMBL" id="CP002687">
    <property type="protein sequence ID" value="AEE86967.1"/>
    <property type="molecule type" value="Genomic_DNA"/>
</dbReference>
<dbReference type="EMBL" id="CP002687">
    <property type="protein sequence ID" value="AEE86968.1"/>
    <property type="molecule type" value="Genomic_DNA"/>
</dbReference>
<dbReference type="EMBL" id="AY062647">
    <property type="protein sequence ID" value="AAL32725.1"/>
    <property type="molecule type" value="mRNA"/>
</dbReference>
<dbReference type="EMBL" id="AY093255">
    <property type="protein sequence ID" value="AAM13254.1"/>
    <property type="molecule type" value="mRNA"/>
</dbReference>
<dbReference type="PIR" id="T05699">
    <property type="entry name" value="T05699"/>
</dbReference>
<dbReference type="RefSeq" id="NP_001190956.1">
    <molecule id="Q9SZP8-2"/>
    <property type="nucleotide sequence ID" value="NM_001204027.2"/>
</dbReference>
<dbReference type="RefSeq" id="NP_195583.1">
    <molecule id="Q9SZP8-1"/>
    <property type="nucleotide sequence ID" value="NM_120032.4"/>
</dbReference>
<dbReference type="FunCoup" id="Q9SZP8">
    <property type="interactions" value="132"/>
</dbReference>
<dbReference type="IntAct" id="Q9SZP8">
    <property type="interactions" value="1"/>
</dbReference>
<dbReference type="STRING" id="3702.Q9SZP8"/>
<dbReference type="iPTMnet" id="Q9SZP8"/>
<dbReference type="PaxDb" id="3702-AT4G38710.2"/>
<dbReference type="ProteomicsDB" id="228875">
    <molecule id="Q9SZP8-1"/>
</dbReference>
<dbReference type="EnsemblPlants" id="AT4G38710.1">
    <molecule id="Q9SZP8-1"/>
    <property type="protein sequence ID" value="AT4G38710.1"/>
    <property type="gene ID" value="AT4G38710"/>
</dbReference>
<dbReference type="EnsemblPlants" id="AT4G38710.2">
    <molecule id="Q9SZP8-2"/>
    <property type="protein sequence ID" value="AT4G38710.2"/>
    <property type="gene ID" value="AT4G38710"/>
</dbReference>
<dbReference type="GeneID" id="830027"/>
<dbReference type="Gramene" id="AT4G38710.1">
    <molecule id="Q9SZP8-1"/>
    <property type="protein sequence ID" value="AT4G38710.1"/>
    <property type="gene ID" value="AT4G38710"/>
</dbReference>
<dbReference type="Gramene" id="AT4G38710.2">
    <molecule id="Q9SZP8-2"/>
    <property type="protein sequence ID" value="AT4G38710.2"/>
    <property type="gene ID" value="AT4G38710"/>
</dbReference>
<dbReference type="KEGG" id="ath:AT4G38710"/>
<dbReference type="Araport" id="AT4G38710"/>
<dbReference type="TAIR" id="AT4G38710"/>
<dbReference type="eggNOG" id="ENOG502QWFU">
    <property type="taxonomic scope" value="Eukaryota"/>
</dbReference>
<dbReference type="InParanoid" id="Q9SZP8"/>
<dbReference type="OMA" id="IDDWGAG"/>
<dbReference type="OrthoDB" id="48651at2759"/>
<dbReference type="PhylomeDB" id="Q9SZP8"/>
<dbReference type="PRO" id="PR:Q9SZP8"/>
<dbReference type="Proteomes" id="UP000006548">
    <property type="component" value="Chromosome 4"/>
</dbReference>
<dbReference type="ExpressionAtlas" id="Q9SZP8">
    <property type="expression patterns" value="baseline and differential"/>
</dbReference>
<dbReference type="GO" id="GO:0005634">
    <property type="term" value="C:nucleus"/>
    <property type="evidence" value="ECO:0007669"/>
    <property type="project" value="UniProtKB-SubCell"/>
</dbReference>
<dbReference type="GO" id="GO:0005886">
    <property type="term" value="C:plasma membrane"/>
    <property type="evidence" value="ECO:0007005"/>
    <property type="project" value="TAIR"/>
</dbReference>
<dbReference type="GO" id="GO:0003729">
    <property type="term" value="F:mRNA binding"/>
    <property type="evidence" value="ECO:0000314"/>
    <property type="project" value="TAIR"/>
</dbReference>
<dbReference type="GO" id="GO:0042803">
    <property type="term" value="F:protein homodimerization activity"/>
    <property type="evidence" value="ECO:0000250"/>
    <property type="project" value="UniProtKB"/>
</dbReference>
<dbReference type="GO" id="GO:0003743">
    <property type="term" value="F:translation initiation factor activity"/>
    <property type="evidence" value="ECO:0007669"/>
    <property type="project" value="UniProtKB-KW"/>
</dbReference>
<dbReference type="InterPro" id="IPR010433">
    <property type="entry name" value="EIF-4B_pln"/>
</dbReference>
<dbReference type="PANTHER" id="PTHR32091">
    <property type="entry name" value="EUKARYOTIC TRANSLATION INITIATION FACTOR 4B"/>
    <property type="match status" value="1"/>
</dbReference>
<dbReference type="PANTHER" id="PTHR32091:SF17">
    <property type="entry name" value="EUKARYOTIC TRANSLATION INITIATION FACTOR 4B3"/>
    <property type="match status" value="1"/>
</dbReference>
<dbReference type="Pfam" id="PF06273">
    <property type="entry name" value="eIF-4B"/>
    <property type="match status" value="1"/>
</dbReference>
<name>IF4B3_ARATH</name>
<evidence type="ECO:0000250" key="1">
    <source>
        <dbReference type="UniProtKB" id="Q9AUJ7"/>
    </source>
</evidence>
<evidence type="ECO:0000250" key="2">
    <source>
        <dbReference type="UniProtKB" id="Q9SAD7"/>
    </source>
</evidence>
<evidence type="ECO:0000255" key="3">
    <source>
        <dbReference type="PROSITE-ProRule" id="PRU00768"/>
    </source>
</evidence>
<evidence type="ECO:0000256" key="4">
    <source>
        <dbReference type="SAM" id="MobiDB-lite"/>
    </source>
</evidence>
<evidence type="ECO:0000269" key="5">
    <source>
    </source>
</evidence>
<evidence type="ECO:0000303" key="6">
    <source>
    </source>
</evidence>
<evidence type="ECO:0000305" key="7"/>
<evidence type="ECO:0000312" key="8">
    <source>
        <dbReference type="EMBL" id="AEE86967.1"/>
    </source>
</evidence>
<evidence type="ECO:0000312" key="9">
    <source>
        <dbReference type="EMBL" id="CAB37527.1"/>
    </source>
</evidence>
<evidence type="ECO:0000312" key="10">
    <source>
        <dbReference type="Proteomes" id="UP000006548"/>
    </source>
</evidence>
<evidence type="ECO:0007744" key="11">
    <source>
    </source>
</evidence>
<evidence type="ECO:0007744" key="12">
    <source>
    </source>
</evidence>
<feature type="initiator methionine" description="Removed" evidence="12">
    <location>
        <position position="1"/>
    </location>
</feature>
<feature type="chain" id="PRO_0000434276" description="Eukaryotic translation initiation factor 4B3">
    <location>
        <begin position="2"/>
        <end position="452"/>
    </location>
</feature>
<feature type="region of interest" description="Disordered" evidence="4">
    <location>
        <begin position="20"/>
        <end position="282"/>
    </location>
</feature>
<feature type="region of interest" description="Disordered" evidence="4">
    <location>
        <begin position="349"/>
        <end position="452"/>
    </location>
</feature>
<feature type="short sequence motif" description="Nuclear localization signal 1" evidence="3">
    <location>
        <begin position="172"/>
        <end position="179"/>
    </location>
</feature>
<feature type="short sequence motif" description="Nuclear localization signal 2" evidence="3">
    <location>
        <begin position="215"/>
        <end position="222"/>
    </location>
</feature>
<feature type="compositionally biased region" description="Polar residues" evidence="4">
    <location>
        <begin position="28"/>
        <end position="37"/>
    </location>
</feature>
<feature type="compositionally biased region" description="Basic and acidic residues" evidence="4">
    <location>
        <begin position="98"/>
        <end position="110"/>
    </location>
</feature>
<feature type="compositionally biased region" description="Gly residues" evidence="4">
    <location>
        <begin position="111"/>
        <end position="122"/>
    </location>
</feature>
<feature type="compositionally biased region" description="Low complexity" evidence="4">
    <location>
        <begin position="126"/>
        <end position="136"/>
    </location>
</feature>
<feature type="compositionally biased region" description="Basic and acidic residues" evidence="4">
    <location>
        <begin position="137"/>
        <end position="156"/>
    </location>
</feature>
<feature type="compositionally biased region" description="Basic and acidic residues" evidence="4">
    <location>
        <begin position="227"/>
        <end position="243"/>
    </location>
</feature>
<feature type="compositionally biased region" description="Low complexity" evidence="4">
    <location>
        <begin position="265"/>
        <end position="280"/>
    </location>
</feature>
<feature type="compositionally biased region" description="Basic and acidic residues" evidence="4">
    <location>
        <begin position="369"/>
        <end position="386"/>
    </location>
</feature>
<feature type="compositionally biased region" description="Acidic residues" evidence="4">
    <location>
        <begin position="387"/>
        <end position="397"/>
    </location>
</feature>
<feature type="compositionally biased region" description="Basic and acidic residues" evidence="4">
    <location>
        <begin position="400"/>
        <end position="419"/>
    </location>
</feature>
<feature type="compositionally biased region" description="Basic and acidic residues" evidence="4">
    <location>
        <begin position="441"/>
        <end position="452"/>
    </location>
</feature>
<feature type="modified residue" description="N-acetylalanine" evidence="12">
    <location>
        <position position="2"/>
    </location>
</feature>
<feature type="modified residue" description="Phosphoserine" evidence="11">
    <location>
        <position position="234"/>
    </location>
</feature>
<feature type="modified residue" description="Phosphoserine" evidence="11">
    <location>
        <position position="270"/>
    </location>
</feature>
<feature type="modified residue" description="Phosphoserine" evidence="11">
    <location>
        <position position="300"/>
    </location>
</feature>
<feature type="splice variant" id="VSP_057921" description="In isoform 2.">
    <original>S</original>
    <variation>SFSLHSYMEVDVLN</variation>
    <location>
        <position position="383"/>
    </location>
</feature>